<name>CHS7_PICMA</name>
<feature type="chain" id="PRO_0000216040" description="Chalcone synthase 7">
    <location>
        <begin position="1"/>
        <end position="395"/>
    </location>
</feature>
<feature type="active site" evidence="1">
    <location>
        <position position="169"/>
    </location>
</feature>
<reference key="1">
    <citation type="submission" date="2000-01" db="EMBL/GenBank/DDBJ databases">
        <title>Characterization of the black spruce chalcone gene family.</title>
        <authorList>
            <person name="Xue B.G."/>
            <person name="Rutledge R.G."/>
        </authorList>
    </citation>
    <scope>NUCLEOTIDE SEQUENCE [MRNA]</scope>
    <source>
        <tissue>Cone</tissue>
    </source>
</reference>
<proteinExistence type="evidence at transcript level"/>
<keyword id="KW-0012">Acyltransferase</keyword>
<keyword id="KW-0284">Flavonoid biosynthesis</keyword>
<keyword id="KW-0808">Transferase</keyword>
<comment type="function">
    <text>The primary product of this enzyme is 4,2',4',6'-tetrahydroxychalcone (also termed naringenin-chalcone or chalcone) which can under specific conditions spontaneously isomerize into naringenin.</text>
</comment>
<comment type="catalytic activity">
    <reaction evidence="1">
        <text>(E)-4-coumaroyl-CoA + 3 malonyl-CoA + 3 H(+) = 2',4,4',6'-tetrahydroxychalcone + 3 CO2 + 4 CoA</text>
        <dbReference type="Rhea" id="RHEA:11128"/>
        <dbReference type="ChEBI" id="CHEBI:15378"/>
        <dbReference type="ChEBI" id="CHEBI:15413"/>
        <dbReference type="ChEBI" id="CHEBI:16526"/>
        <dbReference type="ChEBI" id="CHEBI:57287"/>
        <dbReference type="ChEBI" id="CHEBI:57384"/>
        <dbReference type="ChEBI" id="CHEBI:85008"/>
        <dbReference type="EC" id="2.3.1.74"/>
    </reaction>
</comment>
<comment type="pathway">
    <text>Secondary metabolite biosynthesis; flavonoid biosynthesis.</text>
</comment>
<comment type="similarity">
    <text evidence="2">Belongs to the thiolase-like superfamily. Chalcone/stilbene synthases family.</text>
</comment>
<dbReference type="EC" id="2.3.1.74"/>
<dbReference type="EMBL" id="AF227627">
    <property type="protein sequence ID" value="AAF35890.1"/>
    <property type="molecule type" value="mRNA"/>
</dbReference>
<dbReference type="SMR" id="Q9M5M0"/>
<dbReference type="UniPathway" id="UPA00154"/>
<dbReference type="GO" id="GO:0016210">
    <property type="term" value="F:naringenin-chalcone synthase activity"/>
    <property type="evidence" value="ECO:0007669"/>
    <property type="project" value="UniProtKB-EC"/>
</dbReference>
<dbReference type="GO" id="GO:0009813">
    <property type="term" value="P:flavonoid biosynthetic process"/>
    <property type="evidence" value="ECO:0007669"/>
    <property type="project" value="UniProtKB-UniPathway"/>
</dbReference>
<dbReference type="GO" id="GO:0030639">
    <property type="term" value="P:polyketide biosynthetic process"/>
    <property type="evidence" value="ECO:0007669"/>
    <property type="project" value="TreeGrafter"/>
</dbReference>
<dbReference type="CDD" id="cd00831">
    <property type="entry name" value="CHS_like"/>
    <property type="match status" value="1"/>
</dbReference>
<dbReference type="FunFam" id="3.40.47.10:FF:000014">
    <property type="entry name" value="Chalcone synthase 1"/>
    <property type="match status" value="1"/>
</dbReference>
<dbReference type="FunFam" id="3.40.47.10:FF:000025">
    <property type="entry name" value="Chalcone synthase 2"/>
    <property type="match status" value="1"/>
</dbReference>
<dbReference type="Gene3D" id="3.40.47.10">
    <property type="match status" value="2"/>
</dbReference>
<dbReference type="InterPro" id="IPR012328">
    <property type="entry name" value="Chalcone/stilbene_synt_C"/>
</dbReference>
<dbReference type="InterPro" id="IPR001099">
    <property type="entry name" value="Chalcone/stilbene_synt_N"/>
</dbReference>
<dbReference type="InterPro" id="IPR018088">
    <property type="entry name" value="Chalcone/stilbene_synthase_AS"/>
</dbReference>
<dbReference type="InterPro" id="IPR011141">
    <property type="entry name" value="Polyketide_synthase_type-III"/>
</dbReference>
<dbReference type="InterPro" id="IPR016039">
    <property type="entry name" value="Thiolase-like"/>
</dbReference>
<dbReference type="PANTHER" id="PTHR11877:SF14">
    <property type="entry name" value="CHALCONE SYNTHASE"/>
    <property type="match status" value="1"/>
</dbReference>
<dbReference type="PANTHER" id="PTHR11877">
    <property type="entry name" value="HYDROXYMETHYLGLUTARYL-COA SYNTHASE"/>
    <property type="match status" value="1"/>
</dbReference>
<dbReference type="Pfam" id="PF02797">
    <property type="entry name" value="Chal_sti_synt_C"/>
    <property type="match status" value="1"/>
</dbReference>
<dbReference type="Pfam" id="PF00195">
    <property type="entry name" value="Chal_sti_synt_N"/>
    <property type="match status" value="1"/>
</dbReference>
<dbReference type="PIRSF" id="PIRSF000451">
    <property type="entry name" value="PKS_III"/>
    <property type="match status" value="1"/>
</dbReference>
<dbReference type="SUPFAM" id="SSF53901">
    <property type="entry name" value="Thiolase-like"/>
    <property type="match status" value="2"/>
</dbReference>
<dbReference type="PROSITE" id="PS00441">
    <property type="entry name" value="CHALCONE_SYNTH"/>
    <property type="match status" value="1"/>
</dbReference>
<gene>
    <name type="primary">CSF7</name>
</gene>
<protein>
    <recommendedName>
        <fullName>Chalcone synthase 7</fullName>
        <ecNumber>2.3.1.74</ecNumber>
    </recommendedName>
    <alternativeName>
        <fullName>Naregenin-chalcone synthase 7</fullName>
    </alternativeName>
</protein>
<evidence type="ECO:0000255" key="1">
    <source>
        <dbReference type="PROSITE-ProRule" id="PRU10023"/>
    </source>
</evidence>
<evidence type="ECO:0000305" key="2"/>
<organism>
    <name type="scientific">Picea mariana</name>
    <name type="common">Black spruce</name>
    <name type="synonym">Abies mariana</name>
    <dbReference type="NCBI Taxonomy" id="3335"/>
    <lineage>
        <taxon>Eukaryota</taxon>
        <taxon>Viridiplantae</taxon>
        <taxon>Streptophyta</taxon>
        <taxon>Embryophyta</taxon>
        <taxon>Tracheophyta</taxon>
        <taxon>Spermatophyta</taxon>
        <taxon>Pinopsida</taxon>
        <taxon>Pinidae</taxon>
        <taxon>Conifers I</taxon>
        <taxon>Pinales</taxon>
        <taxon>Pinaceae</taxon>
        <taxon>Picea</taxon>
    </lineage>
</organism>
<accession>Q9M5M0</accession>
<sequence>MAGGLMADLEAFRKAQRADGPATILAIGTATPPNAVDQSTYPDYYFKITNSEHMTELKEKFQRMCDKSAIKKRYMYLTDEILKENPNVCEYMAPSLDARQDMVVVEVPRLGKEAATKAIKEWGQPKSKITHVIFCTTSGVDMPGADYQLTKLLGLRPSVKRVMMYQQGCFAGGTVLRVAKDLAENNRGARVLVVCSEITAVTFRGPSDTHLDSMVGQALFGDGAAALIVGADPIPQVEKPCFELMWTAQTILPDSDGAIDGHLREVGLTFHLLKDVPGLISKNIEKSLVEAFQQFGISDWNQLFWIAHPGGPAILDQVEAKLNLDPKKLRATRQVLSEYGNMSSACVHFILDEMRKSSNEKGCSTTGEGLDVGVLFGFGPGLTVETVVLKSVPLQ</sequence>